<reference key="1">
    <citation type="journal article" date="1997" name="Microbiology">
        <title>Expression of CEL2 and CEL4, two proteins from Agaricus bisporus with similarity to fungal cellobiohydrolase I and beta-mannanase, respectively, is regulated by the carbon source.</title>
        <authorList>
            <person name="Yague E."/>
            <person name="Mehak-Zunic M."/>
            <person name="Morgan L."/>
            <person name="Wood D.A."/>
            <person name="Thurston C.F."/>
        </authorList>
    </citation>
    <scope>NUCLEOTIDE SEQUENCE [MRNA]</scope>
    <source>
        <strain>D649</strain>
    </source>
</reference>
<keyword id="KW-0119">Carbohydrate metabolism</keyword>
<keyword id="KW-0136">Cellulose degradation</keyword>
<keyword id="KW-1015">Disulfide bond</keyword>
<keyword id="KW-0325">Glycoprotein</keyword>
<keyword id="KW-0326">Glycosidase</keyword>
<keyword id="KW-0378">Hydrolase</keyword>
<keyword id="KW-0624">Polysaccharide degradation</keyword>
<keyword id="KW-0732">Signal</keyword>
<evidence type="ECO:0000250" key="1"/>
<evidence type="ECO:0000255" key="2"/>
<evidence type="ECO:0000255" key="3">
    <source>
        <dbReference type="PROSITE-ProRule" id="PRU00597"/>
    </source>
</evidence>
<evidence type="ECO:0000256" key="4">
    <source>
        <dbReference type="SAM" id="MobiDB-lite"/>
    </source>
</evidence>
<evidence type="ECO:0000305" key="5"/>
<comment type="function">
    <text>The biological conversion of cellulose to glucose generally requires three types of hydrolytic enzymes: (1) Endoglucanases which cut internal beta-1,4-glucosidic bonds; (2) Exocellobiohydrolases that cut the disaccharide cellobiose from the non-reducing end of the cellulose polymer chain; (3) Beta-1,4-glucosidases which hydrolyze the cellobiose and other short cello-oligosaccharides to glucose.</text>
</comment>
<comment type="catalytic activity">
    <reaction>
        <text>Hydrolysis of (1-&gt;4)-beta-D-glucosidic linkages in cellulose and cellotetraose, releasing cellobiose from the non-reducing ends of the chains.</text>
        <dbReference type="EC" id="3.2.1.91"/>
    </reaction>
</comment>
<comment type="similarity">
    <text evidence="5">Belongs to the glycosyl hydrolase 7 (cellulase C) family.</text>
</comment>
<organism>
    <name type="scientific">Agaricus bisporus</name>
    <name type="common">White button mushroom</name>
    <dbReference type="NCBI Taxonomy" id="5341"/>
    <lineage>
        <taxon>Eukaryota</taxon>
        <taxon>Fungi</taxon>
        <taxon>Dikarya</taxon>
        <taxon>Basidiomycota</taxon>
        <taxon>Agaricomycotina</taxon>
        <taxon>Agaricomycetes</taxon>
        <taxon>Agaricomycetidae</taxon>
        <taxon>Agaricales</taxon>
        <taxon>Agaricineae</taxon>
        <taxon>Agaricaceae</taxon>
        <taxon>Agaricus</taxon>
    </lineage>
</organism>
<gene>
    <name type="primary">cel2</name>
</gene>
<accession>Q92400</accession>
<proteinExistence type="evidence at transcript level"/>
<name>GUX2_AGABI</name>
<dbReference type="EC" id="3.2.1.91"/>
<dbReference type="EMBL" id="Z50094">
    <property type="protein sequence ID" value="CAA90422.1"/>
    <property type="molecule type" value="mRNA"/>
</dbReference>
<dbReference type="SMR" id="Q92400"/>
<dbReference type="CAZy" id="CBM1">
    <property type="family name" value="Carbohydrate-Binding Module Family 1"/>
</dbReference>
<dbReference type="CAZy" id="GH7">
    <property type="family name" value="Glycoside Hydrolase Family 7"/>
</dbReference>
<dbReference type="GlyCosmos" id="Q92400">
    <property type="glycosylation" value="2 sites, No reported glycans"/>
</dbReference>
<dbReference type="GO" id="GO:0005576">
    <property type="term" value="C:extracellular region"/>
    <property type="evidence" value="ECO:0007669"/>
    <property type="project" value="InterPro"/>
</dbReference>
<dbReference type="GO" id="GO:0016162">
    <property type="term" value="F:cellulose 1,4-beta-cellobiosidase activity"/>
    <property type="evidence" value="ECO:0007669"/>
    <property type="project" value="UniProtKB-EC"/>
</dbReference>
<dbReference type="GO" id="GO:0030248">
    <property type="term" value="F:cellulose binding"/>
    <property type="evidence" value="ECO:0007669"/>
    <property type="project" value="InterPro"/>
</dbReference>
<dbReference type="GO" id="GO:0030245">
    <property type="term" value="P:cellulose catabolic process"/>
    <property type="evidence" value="ECO:0007669"/>
    <property type="project" value="UniProtKB-KW"/>
</dbReference>
<dbReference type="CDD" id="cd07999">
    <property type="entry name" value="GH7_CBH_EG"/>
    <property type="match status" value="1"/>
</dbReference>
<dbReference type="FunFam" id="2.70.100.10:FF:000001">
    <property type="entry name" value="Glucanase"/>
    <property type="match status" value="1"/>
</dbReference>
<dbReference type="Gene3D" id="2.70.100.10">
    <property type="entry name" value="Glycoside hydrolase, family 7, domain"/>
    <property type="match status" value="1"/>
</dbReference>
<dbReference type="InterPro" id="IPR035971">
    <property type="entry name" value="CBD_sf"/>
</dbReference>
<dbReference type="InterPro" id="IPR000254">
    <property type="entry name" value="Cellulose-bd_dom_fun"/>
</dbReference>
<dbReference type="InterPro" id="IPR013320">
    <property type="entry name" value="ConA-like_dom_sf"/>
</dbReference>
<dbReference type="InterPro" id="IPR001722">
    <property type="entry name" value="Glyco_hydro_7"/>
</dbReference>
<dbReference type="InterPro" id="IPR037019">
    <property type="entry name" value="Glyco_hydro_7_sf"/>
</dbReference>
<dbReference type="PANTHER" id="PTHR33753">
    <property type="entry name" value="1,4-BETA-D-GLUCAN CELLOBIOHYDROLASE B"/>
    <property type="match status" value="1"/>
</dbReference>
<dbReference type="PANTHER" id="PTHR33753:SF2">
    <property type="entry name" value="GLYCOSIDE HYDROLASE FAMILY 7 PROTEIN"/>
    <property type="match status" value="1"/>
</dbReference>
<dbReference type="Pfam" id="PF00734">
    <property type="entry name" value="CBM_1"/>
    <property type="match status" value="1"/>
</dbReference>
<dbReference type="Pfam" id="PF00840">
    <property type="entry name" value="Glyco_hydro_7"/>
    <property type="match status" value="1"/>
</dbReference>
<dbReference type="PRINTS" id="PR00734">
    <property type="entry name" value="GLHYDRLASE7"/>
</dbReference>
<dbReference type="SMART" id="SM00236">
    <property type="entry name" value="fCBD"/>
    <property type="match status" value="1"/>
</dbReference>
<dbReference type="SUPFAM" id="SSF57180">
    <property type="entry name" value="Cellulose-binding domain"/>
    <property type="match status" value="1"/>
</dbReference>
<dbReference type="SUPFAM" id="SSF49899">
    <property type="entry name" value="Concanavalin A-like lectins/glucanases"/>
    <property type="match status" value="1"/>
</dbReference>
<dbReference type="PROSITE" id="PS00562">
    <property type="entry name" value="CBM1_1"/>
    <property type="match status" value="1"/>
</dbReference>
<dbReference type="PROSITE" id="PS51164">
    <property type="entry name" value="CBM1_2"/>
    <property type="match status" value="1"/>
</dbReference>
<sequence>MFPRSILLALSLTAVALGQQVGTNMAENHPSLTWQRCTSSGCQNVNGKVTLDANWRWTHRINDFTNCYTGNEWDTSICPDGVTCAENCALDGADYAGTYGVTSSGTALTLKFVTESQQKNIGSRLYLMADDSNYEIFNLLNKEFTFDVDVSKLPCGLNGALYFSEMAADGGMSSTNTAGAKYGTGYCDSQCPRDIKFIDGEANSEGWEGSPNDVNAGTGNFGACCGEMDIWEANSISSAYTPHPCREPGLQRCEGNTCSVNDRYATECDPDGCDFNSFRMGDKSFYGPGMTVDTNQPITVVTQFITDNGSDNGNLQEIRRIYVQNGQVIQNSNVNIPGIDSGNSISAEFCDQAKEAFGDERSFQDRGGLSGMGSALDRGMVLVLSIWDDHAVNMLWLDSDYPLDASPSQPGISRGTCSRDSGKPEDVEANAGGVQVVYSNIKFGDINSTFNNNGGGGGNPSPTTTRPNSPAQTMWGQCGGQGWTGPTACQSPSTCHVINDFYSQCF</sequence>
<protein>
    <recommendedName>
        <fullName>Exoglucanase</fullName>
        <ecNumber>3.2.1.91</ecNumber>
    </recommendedName>
    <alternativeName>
        <fullName>1,4-beta-cellobiohydrolase</fullName>
    </alternativeName>
    <alternativeName>
        <fullName>Beta-glucancellobiohydrolase</fullName>
    </alternativeName>
    <alternativeName>
        <fullName>Exocellobiohydrolase</fullName>
    </alternativeName>
</protein>
<feature type="signal peptide" evidence="2">
    <location>
        <begin position="1"/>
        <end position="18"/>
    </location>
</feature>
<feature type="chain" id="PRO_0000007917" description="Exoglucanase">
    <location>
        <begin position="19"/>
        <end position="506"/>
    </location>
</feature>
<feature type="domain" description="CBM1" evidence="3">
    <location>
        <begin position="470"/>
        <end position="506"/>
    </location>
</feature>
<feature type="region of interest" description="Catalytic">
    <location>
        <begin position="19"/>
        <end position="450"/>
    </location>
</feature>
<feature type="region of interest" description="Disordered" evidence="4">
    <location>
        <begin position="405"/>
        <end position="426"/>
    </location>
</feature>
<feature type="region of interest" description="Disordered" evidence="4">
    <location>
        <begin position="449"/>
        <end position="472"/>
    </location>
</feature>
<feature type="region of interest" description="Linker">
    <location>
        <begin position="451"/>
        <end position="473"/>
    </location>
</feature>
<feature type="compositionally biased region" description="Polar residues" evidence="4">
    <location>
        <begin position="406"/>
        <end position="419"/>
    </location>
</feature>
<feature type="compositionally biased region" description="Low complexity" evidence="4">
    <location>
        <begin position="460"/>
        <end position="470"/>
    </location>
</feature>
<feature type="active site" description="Nucleophile" evidence="1">
    <location>
        <position position="227"/>
    </location>
</feature>
<feature type="active site" description="Proton donor" evidence="1">
    <location>
        <position position="232"/>
    </location>
</feature>
<feature type="glycosylation site" description="N-linked (GlcNAc...) asparagine" evidence="2">
    <location>
        <position position="308"/>
    </location>
</feature>
<feature type="glycosylation site" description="N-linked (GlcNAc...) asparagine" evidence="2">
    <location>
        <position position="447"/>
    </location>
</feature>
<feature type="disulfide bond" evidence="1">
    <location>
        <begin position="478"/>
        <end position="495"/>
    </location>
</feature>
<feature type="disulfide bond" evidence="1">
    <location>
        <begin position="489"/>
        <end position="505"/>
    </location>
</feature>